<accession>G5EFI7</accession>
<reference key="1">
    <citation type="journal article" date="1998" name="Science">
        <title>Genome sequence of the nematode C. elegans: a platform for investigating biology.</title>
        <authorList>
            <consortium name="The C. elegans sequencing consortium"/>
        </authorList>
    </citation>
    <scope>NUCLEOTIDE SEQUENCE [LARGE SCALE GENOMIC DNA]</scope>
    <source>
        <strain>Bristol N2</strain>
    </source>
</reference>
<reference key="2">
    <citation type="journal article" date="2011" name="Dev. Biol.">
        <title>Regulation of the C. elegans molt by pqn-47.</title>
        <authorList>
            <person name="Russel S."/>
            <person name="Frand A.R."/>
            <person name="Ruvkun G."/>
        </authorList>
    </citation>
    <scope>TISSUE SPECIFICITY</scope>
</reference>
<reference key="3">
    <citation type="journal article" date="2017" name="Dev. Cell">
        <title>Myrf ER-bound transcription factors drive C. elegans synaptic plasticity via cleavage-dependent nuclear translocation.</title>
        <authorList>
            <person name="Meng J."/>
            <person name="Ma X."/>
            <person name="Tao H."/>
            <person name="Jin X."/>
            <person name="Witvliet D."/>
            <person name="Mitchell J."/>
            <person name="Zhu M."/>
            <person name="Dong M.Q."/>
            <person name="Zhen M."/>
            <person name="Jin Y."/>
            <person name="Qi Y.B."/>
        </authorList>
    </citation>
    <scope>FUNCTION</scope>
    <scope>SUBCELLULAR LOCATION</scope>
    <scope>INTERACTION WITH MYRF-2</scope>
    <scope>TISSUE SPECIFICITY</scope>
    <scope>DISRUPTION PHENOTYPE</scope>
    <scope>PROTEOLYTIC PROCESSING</scope>
    <scope>MUTAGENESIS OF GLY-274 AND SER-483</scope>
</reference>
<reference key="4">
    <citation type="journal article" date="2021" name="Elife">
        <title>The LRR-TM protein PAN-1 interacts with MYRF to promote its nuclear translocation in synaptic remodeling.</title>
        <authorList>
            <person name="Xia S.L."/>
            <person name="Li M."/>
            <person name="Chen B."/>
            <person name="Wang C."/>
            <person name="Yan Y.H."/>
            <person name="Dong M.Q."/>
            <person name="Qi Y.B."/>
        </authorList>
    </citation>
    <scope>FUNCTION</scope>
    <scope>INTERACTION WITH PAN-1</scope>
    <scope>SUBCELLULAR LOCATION</scope>
    <scope>DEVELOPMENTAL STAGE</scope>
    <scope>MUTAGENESIS OF 483-SER--SER-931; SER-483; LYS-488; 657-GLY--SER-931; 701-GLY--SER-931 AND 791-ILE--SER-931</scope>
</reference>
<dbReference type="EC" id="3.4.-.-" evidence="1"/>
<dbReference type="EMBL" id="BX284602">
    <property type="protein sequence ID" value="CAA88602.3"/>
    <property type="molecule type" value="Genomic_DNA"/>
</dbReference>
<dbReference type="PIR" id="H88293">
    <property type="entry name" value="H88293"/>
</dbReference>
<dbReference type="PIR" id="T22982">
    <property type="entry name" value="T22982"/>
</dbReference>
<dbReference type="RefSeq" id="NP_496262.2">
    <property type="nucleotide sequence ID" value="NM_063861.5"/>
</dbReference>
<dbReference type="SMR" id="G5EFI7"/>
<dbReference type="ComplexPortal" id="CPX-3521">
    <property type="entry name" value="myrf-1-myrf-2 complex"/>
</dbReference>
<dbReference type="FunCoup" id="G5EFI7">
    <property type="interactions" value="152"/>
</dbReference>
<dbReference type="IntAct" id="G5EFI7">
    <property type="interactions" value="3"/>
</dbReference>
<dbReference type="STRING" id="6239.F59B10.1.1"/>
<dbReference type="GlyCosmos" id="G5EFI7">
    <property type="glycosylation" value="2 sites, No reported glycans"/>
</dbReference>
<dbReference type="PaxDb" id="6239-F59B10.1"/>
<dbReference type="PeptideAtlas" id="G5EFI7"/>
<dbReference type="EnsemblMetazoa" id="F59B10.1.1">
    <property type="protein sequence ID" value="F59B10.1.1"/>
    <property type="gene ID" value="WBGene00004134"/>
</dbReference>
<dbReference type="GeneID" id="174614"/>
<dbReference type="KEGG" id="cel:CELE_F59B10.1"/>
<dbReference type="AGR" id="WB:WBGene00004134"/>
<dbReference type="CTD" id="174614"/>
<dbReference type="WormBase" id="F59B10.1">
    <property type="protein sequence ID" value="CE36940"/>
    <property type="gene ID" value="WBGene00004134"/>
    <property type="gene designation" value="myrf-1"/>
</dbReference>
<dbReference type="eggNOG" id="KOG3661">
    <property type="taxonomic scope" value="Eukaryota"/>
</dbReference>
<dbReference type="GeneTree" id="ENSGT00530000063626"/>
<dbReference type="HOGENOM" id="CLU_010255_0_0_1"/>
<dbReference type="InParanoid" id="G5EFI7"/>
<dbReference type="OMA" id="CHNPGAS"/>
<dbReference type="OrthoDB" id="27041at2759"/>
<dbReference type="PhylomeDB" id="G5EFI7"/>
<dbReference type="PRO" id="PR:G5EFI7"/>
<dbReference type="Proteomes" id="UP000001940">
    <property type="component" value="Chromosome II"/>
</dbReference>
<dbReference type="Bgee" id="WBGene00004134">
    <property type="expression patterns" value="Expressed in pharyngeal muscle cell (C elegans) and 3 other cell types or tissues"/>
</dbReference>
<dbReference type="GO" id="GO:0016324">
    <property type="term" value="C:apical plasma membrane"/>
    <property type="evidence" value="ECO:0007669"/>
    <property type="project" value="UniProtKB-SubCell"/>
</dbReference>
<dbReference type="GO" id="GO:0045178">
    <property type="term" value="C:basal part of cell"/>
    <property type="evidence" value="ECO:0000314"/>
    <property type="project" value="WormBase"/>
</dbReference>
<dbReference type="GO" id="GO:0005737">
    <property type="term" value="C:cytoplasm"/>
    <property type="evidence" value="ECO:0000314"/>
    <property type="project" value="WormBase"/>
</dbReference>
<dbReference type="GO" id="GO:0005783">
    <property type="term" value="C:endoplasmic reticulum"/>
    <property type="evidence" value="ECO:0000314"/>
    <property type="project" value="WormBase"/>
</dbReference>
<dbReference type="GO" id="GO:0005789">
    <property type="term" value="C:endoplasmic reticulum membrane"/>
    <property type="evidence" value="ECO:0000318"/>
    <property type="project" value="GO_Central"/>
</dbReference>
<dbReference type="GO" id="GO:0005634">
    <property type="term" value="C:nucleus"/>
    <property type="evidence" value="ECO:0000318"/>
    <property type="project" value="GO_Central"/>
</dbReference>
<dbReference type="GO" id="GO:0005667">
    <property type="term" value="C:transcription regulator complex"/>
    <property type="evidence" value="ECO:0000303"/>
    <property type="project" value="ComplexPortal"/>
</dbReference>
<dbReference type="GO" id="GO:0003700">
    <property type="term" value="F:DNA-binding transcription factor activity"/>
    <property type="evidence" value="ECO:0000318"/>
    <property type="project" value="GO_Central"/>
</dbReference>
<dbReference type="GO" id="GO:0008233">
    <property type="term" value="F:peptidase activity"/>
    <property type="evidence" value="ECO:0007669"/>
    <property type="project" value="UniProtKB-KW"/>
</dbReference>
<dbReference type="GO" id="GO:0043565">
    <property type="term" value="F:sequence-specific DNA binding"/>
    <property type="evidence" value="ECO:0000318"/>
    <property type="project" value="GO_Central"/>
</dbReference>
<dbReference type="GO" id="GO:0030154">
    <property type="term" value="P:cell differentiation"/>
    <property type="evidence" value="ECO:0007669"/>
    <property type="project" value="UniProtKB-KW"/>
</dbReference>
<dbReference type="GO" id="GO:0042395">
    <property type="term" value="P:ecdysis, collagen and cuticulin-based cuticle"/>
    <property type="evidence" value="ECO:0000315"/>
    <property type="project" value="WormBase"/>
</dbReference>
<dbReference type="GO" id="GO:0018996">
    <property type="term" value="P:molting cycle, collagen and cuticulin-based cuticle"/>
    <property type="evidence" value="ECO:0000316"/>
    <property type="project" value="WormBase"/>
</dbReference>
<dbReference type="GO" id="GO:0002119">
    <property type="term" value="P:nematode larval development"/>
    <property type="evidence" value="ECO:0000315"/>
    <property type="project" value="WormBase"/>
</dbReference>
<dbReference type="GO" id="GO:0045893">
    <property type="term" value="P:positive regulation of DNA-templated transcription"/>
    <property type="evidence" value="ECO:0000318"/>
    <property type="project" value="GO_Central"/>
</dbReference>
<dbReference type="GO" id="GO:0016540">
    <property type="term" value="P:protein autoprocessing"/>
    <property type="evidence" value="ECO:0000250"/>
    <property type="project" value="UniProtKB"/>
</dbReference>
<dbReference type="GO" id="GO:1904799">
    <property type="term" value="P:regulation of neuron remodeling"/>
    <property type="evidence" value="ECO:0000315"/>
    <property type="project" value="ComplexPortal"/>
</dbReference>
<dbReference type="GO" id="GO:0051963">
    <property type="term" value="P:regulation of synapse assembly"/>
    <property type="evidence" value="ECO:0000315"/>
    <property type="project" value="ComplexPortal"/>
</dbReference>
<dbReference type="CDD" id="cd10144">
    <property type="entry name" value="Peptidase_S74_CIMCD"/>
    <property type="match status" value="1"/>
</dbReference>
<dbReference type="Gene3D" id="1.10.10.10">
    <property type="entry name" value="Winged helix-like DNA-binding domain superfamily/Winged helix DNA-binding domain"/>
    <property type="match status" value="1"/>
</dbReference>
<dbReference type="InterPro" id="IPR051577">
    <property type="entry name" value="MRF-like"/>
</dbReference>
<dbReference type="InterPro" id="IPR025719">
    <property type="entry name" value="MYRF_C2"/>
</dbReference>
<dbReference type="InterPro" id="IPR026932">
    <property type="entry name" value="MYRF_ICA"/>
</dbReference>
<dbReference type="InterPro" id="IPR024061">
    <property type="entry name" value="NDT80_DNA-bd_dom"/>
</dbReference>
<dbReference type="InterPro" id="IPR008967">
    <property type="entry name" value="p53-like_TF_DNA-bd_sf"/>
</dbReference>
<dbReference type="InterPro" id="IPR030392">
    <property type="entry name" value="S74_ICA"/>
</dbReference>
<dbReference type="InterPro" id="IPR036388">
    <property type="entry name" value="WH-like_DNA-bd_sf"/>
</dbReference>
<dbReference type="PANTHER" id="PTHR13029">
    <property type="match status" value="1"/>
</dbReference>
<dbReference type="PANTHER" id="PTHR13029:SF18">
    <property type="entry name" value="MYELIN REGULATORY FACTOR HOMOLOG 1"/>
    <property type="match status" value="1"/>
</dbReference>
<dbReference type="Pfam" id="PF13888">
    <property type="entry name" value="MRF_C2"/>
    <property type="match status" value="1"/>
</dbReference>
<dbReference type="Pfam" id="PF13887">
    <property type="entry name" value="MYRF_ICA"/>
    <property type="match status" value="1"/>
</dbReference>
<dbReference type="Pfam" id="PF05224">
    <property type="entry name" value="NDT80_PhoG"/>
    <property type="match status" value="1"/>
</dbReference>
<dbReference type="Pfam" id="PF13884">
    <property type="entry name" value="Peptidase_S74"/>
    <property type="match status" value="1"/>
</dbReference>
<dbReference type="SUPFAM" id="SSF49417">
    <property type="entry name" value="p53-like transcription factors"/>
    <property type="match status" value="1"/>
</dbReference>
<dbReference type="PROSITE" id="PS51688">
    <property type="entry name" value="ICA"/>
    <property type="match status" value="1"/>
</dbReference>
<dbReference type="PROSITE" id="PS51517">
    <property type="entry name" value="NDT80"/>
    <property type="match status" value="1"/>
</dbReference>
<name>MYRF1_CAEEL</name>
<protein>
    <recommendedName>
        <fullName evidence="11">Myelin regulatory factor homolog 1</fullName>
        <ecNumber evidence="1">3.4.-.-</ecNumber>
    </recommendedName>
    <alternativeName>
        <fullName evidence="10">Polyglutamine-repeat protein 47</fullName>
    </alternativeName>
    <component>
        <recommendedName>
            <fullName evidence="12">Myelin regulatory factor homolog 1, N-terminal</fullName>
        </recommendedName>
    </component>
    <component>
        <recommendedName>
            <fullName evidence="12">Myelin regulatory factor homolog 1, C-terminal</fullName>
        </recommendedName>
    </component>
</protein>
<gene>
    <name evidence="11 14" type="primary">myrf-1</name>
    <name evidence="10 14" type="synonym">pqn-47</name>
    <name evidence="14" type="ORF">F59B10.1</name>
</gene>
<evidence type="ECO:0000250" key="1">
    <source>
        <dbReference type="UniProtKB" id="Q9Y2G1"/>
    </source>
</evidence>
<evidence type="ECO:0000255" key="2"/>
<evidence type="ECO:0000255" key="3">
    <source>
        <dbReference type="PROSITE-ProRule" id="PRU00498"/>
    </source>
</evidence>
<evidence type="ECO:0000255" key="4">
    <source>
        <dbReference type="PROSITE-ProRule" id="PRU00850"/>
    </source>
</evidence>
<evidence type="ECO:0000255" key="5">
    <source>
        <dbReference type="PROSITE-ProRule" id="PRU01025"/>
    </source>
</evidence>
<evidence type="ECO:0000256" key="6">
    <source>
        <dbReference type="SAM" id="MobiDB-lite"/>
    </source>
</evidence>
<evidence type="ECO:0000269" key="7">
    <source>
    </source>
</evidence>
<evidence type="ECO:0000269" key="8">
    <source>
    </source>
</evidence>
<evidence type="ECO:0000269" key="9">
    <source>
    </source>
</evidence>
<evidence type="ECO:0000303" key="10">
    <source>
    </source>
</evidence>
<evidence type="ECO:0000303" key="11">
    <source>
    </source>
</evidence>
<evidence type="ECO:0000305" key="12"/>
<evidence type="ECO:0000305" key="13">
    <source>
    </source>
</evidence>
<evidence type="ECO:0000312" key="14">
    <source>
        <dbReference type="WormBase" id="F59B10.1"/>
    </source>
</evidence>
<sequence length="931" mass="104463">MSSSDLLKGEFDGLNSEHFNMMQYLTQDTDEDDGSMVSPTSSADSMHQNLGVQQQQQQMLQAQQRQNQNGIFQPRRFPESPAMTDPCGNVSSSSSSSHHSDPMFSPNEFNGYAGANDNGNQTMNNIQSQQLSQQQHQQTRGGNLMMPQQSSIHAQMQNMNAPQFWSQPGTAAVNQPTNTLAQLNLFNIIRGGADSGMPSPVLEMPRKRSRLDTPCETPRIAPSFAGIDGFPDENYSQQQAIRFSKFQEEQWSPLYDINAQPLQQLQVHVVADKGFNYNSNDNCFVNQKKNHFQISVNVEASDTMPPKYVNFNNRLVPIRDFKLSFCGVKAEMPSSEITIRQSRADRKPHTHTPVLFEIQERRMTKVCVPRLHFSETTLNNQRKQKNRPNPEQKFFLLVVRLFASIDESEHGVLIQSYASEKVIVRATNPGSFEPQDTDIGWQRNGGALYTQGAVSVGTEHQVESAKLTVAGDIYMSGRIINPSDIRLKEAITERETAEAIENLLKLRVVDYRYKPEVADIWGLDEQQRHRTGLIAQELQAVLPDAVRDIGDYLTIDEGRVFYETVMATQQLCRMTGDLDSKIDEKVAEISRRLNEYAVRKKLASSMASNLNGDNKSLSYSRCSLTSTATNATSQPKRSRKHRAIKQAQSCGSRLSQGTVVTLVSIMAACLLAMSALYVLDWHNRNYGYHQHFETNTPSTKGELANLVISPANFMPSFQPDAPILLEKCFNPSCKTYCCTDTPPVVEDSRAIATHGLDNGDEVYPESPSNRTNGIARAPNLEHMAFETGVEIRIPALNVTLDQRYCVERSCNKRKGIFNVFVPVSRYMPDVALEIEIKAPISKVVSNCGAFPSTEFNHKVCPLSRTQQSESPVPTSTRLFDNIFELSMGSFIQSAYRFRVGYSTETCFSEDSNGSYEEYNLIFYRMCTLSSS</sequence>
<keyword id="KW-0010">Activator</keyword>
<keyword id="KW-0068">Autocatalytic cleavage</keyword>
<keyword id="KW-1003">Cell membrane</keyword>
<keyword id="KW-0963">Cytoplasm</keyword>
<keyword id="KW-0221">Differentiation</keyword>
<keyword id="KW-0238">DNA-binding</keyword>
<keyword id="KW-0256">Endoplasmic reticulum</keyword>
<keyword id="KW-0325">Glycoprotein</keyword>
<keyword id="KW-0378">Hydrolase</keyword>
<keyword id="KW-0472">Membrane</keyword>
<keyword id="KW-0539">Nucleus</keyword>
<keyword id="KW-0645">Protease</keyword>
<keyword id="KW-1185">Reference proteome</keyword>
<keyword id="KW-0804">Transcription</keyword>
<keyword id="KW-0805">Transcription regulation</keyword>
<keyword id="KW-0812">Transmembrane</keyword>
<keyword id="KW-1133">Transmembrane helix</keyword>
<comment type="function">
    <molecule>Myelin regulatory factor homolog 1</molecule>
    <text evidence="8">Constitutes a precursor of the transcription factor (PubMed:28441531). Mediates the autocatalytic cleavage that releases the Myelin regulatory factor homolog 1, N-terminal component that specifically activates transcription of genes involved in synaptic rewiring during nervous system maturation (PubMed:28441531).</text>
</comment>
<comment type="function">
    <molecule>Myelin regulatory factor homolog 1, C-terminal</molecule>
    <text evidence="1">Membrane-bound part that has no transcription factor activity and remains attached to the endoplasmic reticulum membrane following cleavage.</text>
</comment>
<comment type="function">
    <molecule>Myelin regulatory factor homolog 1, N-terminal</molecule>
    <text evidence="8 9">Transcription factor that specifically activates expression of genes involved in synaptic rewiring during nervous system maturation (PubMed:28441531). Specifically required for dorsal D (DD) GABAergic motor neurons synaptic rewiring (PubMed:28441531, PubMed:33950834). Acts in complex with myrf-2 paralog (PubMed:28441531).</text>
</comment>
<comment type="subunit">
    <text evidence="1 8 9">Homotrimer (By similarity). Interacts with myrf-2 (PubMed:28441531). Interacts (via C-terminus) with pan-1 (via LRR regions); the interaction promotes the role of myrf-1 in the synaptic remodeling of DD GABAergic motor neurons at the cell membrane (PubMed:33950834).</text>
</comment>
<comment type="interaction">
    <interactant intactId="EBI-6731843">
        <id>G5EFI7</id>
    </interactant>
    <interactant intactId="EBI-6727439">
        <id>D9PTN5</id>
        <label>myrf-2</label>
    </interactant>
    <organismsDiffer>false</organismsDiffer>
    <experiments>2</experiments>
</comment>
<comment type="subcellular location">
    <molecule>Myelin regulatory factor homolog 1</molecule>
    <subcellularLocation>
        <location evidence="8">Endoplasmic reticulum membrane</location>
        <topology evidence="2">Single-pass membrane protein</topology>
    </subcellularLocation>
    <subcellularLocation>
        <location evidence="9">Nucleus</location>
    </subcellularLocation>
    <subcellularLocation>
        <location evidence="9">Apical cell membrane</location>
        <topology evidence="2">Single-pass membrane protein</topology>
    </subcellularLocation>
    <text evidence="9">In early L1 larvae, localizes to the cell membrane of the pharynx, epidermis, and neurons, but is not enriched in the nucleus or cytoplasm of these cell types (PubMed:33950834). Later in the L1 larval stage, accumulates in the nucleus of the pharynx, epidermis, and neurons (PubMed:33950834).</text>
</comment>
<comment type="subcellular location">
    <molecule>Myelin regulatory factor homolog 1, N-terminal</molecule>
    <subcellularLocation>
        <location evidence="2">Endoplasmic reticulum membrane</location>
        <topology evidence="2">Single-pass membrane protein</topology>
    </subcellularLocation>
    <subcellularLocation>
        <location evidence="8">Nucleus</location>
    </subcellularLocation>
    <subcellularLocation>
        <location evidence="8">Cytoplasm</location>
    </subcellularLocation>
    <subcellularLocation>
        <location evidence="9">Apical cell membrane</location>
    </subcellularLocation>
    <text evidence="8 9">Translocates from the cytoplasm to the nucleus upon autocatalytic cleavage (PubMed:28441531). In early L1 larvae, localizes to the cell membrane of the pharynx, epidermis, and neurons, but is not enriched in the nucleus or cytoplasm of these cell types (PubMed:33950834). Cell membrane localization is promoted by pan-1 (PubMed:33950834). Later in the L1 larval stage, accumulates in the nucleus of the pharynx, epidermis, and neurons (PubMed:33950834).</text>
</comment>
<comment type="subcellular location">
    <molecule>Myelin regulatory factor homolog 1, C-terminal</molecule>
    <subcellularLocation>
        <location evidence="8">Endoplasmic reticulum membrane</location>
        <topology evidence="2">Single-pass membrane protein</topology>
    </subcellularLocation>
</comment>
<comment type="tissue specificity">
    <text evidence="7 8">Widely expressed in many tissues, including neuronal, muscle and epidermal stem cells (PubMed:21989027). In neurons, expressed in dorsal D (DD) GABAergic motor neurons (PubMed:28441531).</text>
</comment>
<comment type="developmental stage">
    <molecule>Myelin regulatory factor homolog 1</molecule>
    <text evidence="9">In early L1 larvae, expressed in the pharynx, epidermis, and neurons.</text>
</comment>
<comment type="developmental stage">
    <molecule>Myelin regulatory factor homolog 1, N-terminal</molecule>
    <text evidence="9">In early L1 larvae, expressed in the pharynx, epidermis, and neurons.</text>
</comment>
<comment type="domain">
    <text evidence="1">Myelin regulatory factor: The peptidase S74 domain, also named Intramolecular Chaperone Auto-processed (ICA) domain or Intramolecular Chaperone Domain (ICD), has protease activity and mediates autocatalytic processing of the protein to generate the Myelin regulatory factor, N-terminal active transcription factor and the Myelin regulatory factor, C-terminal components.</text>
</comment>
<comment type="PTM">
    <text evidence="13">Myelin regulatory factor: Follows autocatalytic cleavage via the peptidase S74 domain. Autoprocessing is apparently constitutive and is essential for transcriptional activity.</text>
</comment>
<comment type="disruption phenotype">
    <text evidence="8">Worms show normal dorsal D (DD) GABAergic motor neurons rewiring but show larval lethality. Worms lacking both myrf-1 and myrf-2 display defective DD neurons rewiring.</text>
</comment>
<comment type="similarity">
    <text evidence="12">Belongs to the MRF family.</text>
</comment>
<organism>
    <name type="scientific">Caenorhabditis elegans</name>
    <dbReference type="NCBI Taxonomy" id="6239"/>
    <lineage>
        <taxon>Eukaryota</taxon>
        <taxon>Metazoa</taxon>
        <taxon>Ecdysozoa</taxon>
        <taxon>Nematoda</taxon>
        <taxon>Chromadorea</taxon>
        <taxon>Rhabditida</taxon>
        <taxon>Rhabditina</taxon>
        <taxon>Rhabditomorpha</taxon>
        <taxon>Rhabditoidea</taxon>
        <taxon>Rhabditidae</taxon>
        <taxon>Peloderinae</taxon>
        <taxon>Caenorhabditis</taxon>
    </lineage>
</organism>
<feature type="chain" id="PRO_0000441325" description="Myelin regulatory factor homolog 1">
    <location>
        <begin position="1"/>
        <end position="931"/>
    </location>
</feature>
<feature type="chain" id="PRO_0000441326" description="Myelin regulatory factor homolog 1, N-terminal" evidence="13">
    <location>
        <begin position="1"/>
        <end position="482"/>
    </location>
</feature>
<feature type="chain" id="PRO_0000441327" description="Myelin regulatory factor homolog 1, C-terminal" evidence="13">
    <location>
        <begin position="483"/>
        <end position="931"/>
    </location>
</feature>
<feature type="topological domain" description="Cytoplasmic" evidence="12">
    <location>
        <begin position="1"/>
        <end position="658"/>
    </location>
</feature>
<feature type="transmembrane region" description="Helical" evidence="2">
    <location>
        <begin position="659"/>
        <end position="679"/>
    </location>
</feature>
<feature type="topological domain" description="Lumenal" evidence="12">
    <location>
        <begin position="680"/>
        <end position="931"/>
    </location>
</feature>
<feature type="domain" description="Peptidase S74" evidence="5">
    <location>
        <begin position="483"/>
        <end position="582"/>
    </location>
</feature>
<feature type="DNA-binding region" description="NDT80" evidence="4">
    <location>
        <begin position="169"/>
        <end position="436"/>
    </location>
</feature>
<feature type="region of interest" description="Disordered" evidence="6">
    <location>
        <begin position="29"/>
        <end position="143"/>
    </location>
</feature>
<feature type="compositionally biased region" description="Polar residues" evidence="6">
    <location>
        <begin position="37"/>
        <end position="52"/>
    </location>
</feature>
<feature type="compositionally biased region" description="Low complexity" evidence="6">
    <location>
        <begin position="53"/>
        <end position="68"/>
    </location>
</feature>
<feature type="compositionally biased region" description="Polar residues" evidence="6">
    <location>
        <begin position="117"/>
        <end position="126"/>
    </location>
</feature>
<feature type="compositionally biased region" description="Low complexity" evidence="6">
    <location>
        <begin position="127"/>
        <end position="138"/>
    </location>
</feature>
<feature type="site" description="Cleavage; by autolysis" evidence="5 8">
    <location>
        <begin position="482"/>
        <end position="483"/>
    </location>
</feature>
<feature type="glycosylation site" description="N-linked (GlcNAc...) asparagine" evidence="3">
    <location>
        <position position="797"/>
    </location>
</feature>
<feature type="glycosylation site" description="N-linked (GlcNAc...) asparagine" evidence="3">
    <location>
        <position position="912"/>
    </location>
</feature>
<feature type="mutagenesis site" description="In ju1121; defective dorsal D (DD) GABAergic motor neurons rewiring. Impairs the function of myrf-2 by obstructing its function in the complex formed between myrf-1 and myrf-2." evidence="8">
    <original>G</original>
    <variation>R</variation>
    <location>
        <position position="274"/>
    </location>
</feature>
<feature type="mutagenesis site" description="Lethality at the L2 larval stage. Localizes to the nucleus. Defective synaptic rewiring of DD GABAergic motor neurons." evidence="9">
    <location>
        <begin position="483"/>
        <end position="931"/>
    </location>
</feature>
<feature type="mutagenesis site" description="Prevents cleavage and generation of Myelin regulatory factor homolog 1, N-terminal part. Lethality at the larval developmental stage; when associated with A-488. Only localizes to the cell membrane during viable stages; when associated with A-488. Defective synaptic rewiring of DD GABAergic motor neurons; when associated with A-488." evidence="8 9">
    <original>S</original>
    <variation>A</variation>
    <location>
        <position position="483"/>
    </location>
</feature>
<feature type="mutagenesis site" description="Lethality at the larval developmental stage; when associated with A-483. Only localizes to the cell membrane during viable stages; when associated with A-483. Defective synaptic rewiring of DD GABAergic motor neurons; when associated with A-483." evidence="9">
    <original>K</original>
    <variation>A</variation>
    <location>
        <position position="488"/>
    </location>
</feature>
<feature type="mutagenesis site" description="Lethality at the L2 larval stage. Localizes to the nucleus. Defective synaptic rewiring of DD GABAergic motor neurons." evidence="9">
    <location>
        <begin position="657"/>
        <end position="931"/>
    </location>
</feature>
<feature type="mutagenesis site" description="Lethality at the L2 larval stage. Localizes to the cytoplasm during the viable stages. Localizes to nuclei of seam cells, epidermal cells, and intestinal cells. Precocious synaptic rewiring of DD GABAergic motor neurons whereby dorsal synapses are not uniformly distributed along the dorsal cord, meaning some synaptic rewiring of DD GABAergic motor neurons occurs, but not always. Advances M-cell lineage division. Delays M-cell lineage division in a myrf-2 ybq42 mutant background." evidence="9">
    <location>
        <begin position="701"/>
        <end position="931"/>
    </location>
</feature>
<feature type="mutagenesis site" description="Lethality at the L2 larval stage. Only localizes to the cytoplasm during the viable stages. Abolishes synaptic rewiring of DD GABAergic motor neurons in a myrf-2 ybq42 mutant background." evidence="9">
    <location>
        <begin position="791"/>
        <end position="931"/>
    </location>
</feature>
<proteinExistence type="evidence at protein level"/>